<proteinExistence type="inferred from homology"/>
<protein>
    <recommendedName>
        <fullName evidence="1">Small ribosomal subunit protein uS13</fullName>
    </recommendedName>
    <alternativeName>
        <fullName evidence="3">30S ribosomal protein S13</fullName>
    </alternativeName>
</protein>
<gene>
    <name evidence="1" type="primary">rpsM</name>
    <name type="ordered locus">RPD_3162</name>
</gene>
<dbReference type="EMBL" id="CP000283">
    <property type="protein sequence ID" value="ABE40388.1"/>
    <property type="molecule type" value="Genomic_DNA"/>
</dbReference>
<dbReference type="SMR" id="Q134V1"/>
<dbReference type="STRING" id="316057.RPD_3162"/>
<dbReference type="KEGG" id="rpd:RPD_3162"/>
<dbReference type="eggNOG" id="COG0099">
    <property type="taxonomic scope" value="Bacteria"/>
</dbReference>
<dbReference type="HOGENOM" id="CLU_103849_1_2_5"/>
<dbReference type="BioCyc" id="RPAL316057:RPD_RS15875-MONOMER"/>
<dbReference type="Proteomes" id="UP000001818">
    <property type="component" value="Chromosome"/>
</dbReference>
<dbReference type="GO" id="GO:0005829">
    <property type="term" value="C:cytosol"/>
    <property type="evidence" value="ECO:0007669"/>
    <property type="project" value="TreeGrafter"/>
</dbReference>
<dbReference type="GO" id="GO:0015935">
    <property type="term" value="C:small ribosomal subunit"/>
    <property type="evidence" value="ECO:0007669"/>
    <property type="project" value="TreeGrafter"/>
</dbReference>
<dbReference type="GO" id="GO:0019843">
    <property type="term" value="F:rRNA binding"/>
    <property type="evidence" value="ECO:0007669"/>
    <property type="project" value="UniProtKB-UniRule"/>
</dbReference>
<dbReference type="GO" id="GO:0003735">
    <property type="term" value="F:structural constituent of ribosome"/>
    <property type="evidence" value="ECO:0007669"/>
    <property type="project" value="InterPro"/>
</dbReference>
<dbReference type="GO" id="GO:0000049">
    <property type="term" value="F:tRNA binding"/>
    <property type="evidence" value="ECO:0007669"/>
    <property type="project" value="UniProtKB-UniRule"/>
</dbReference>
<dbReference type="GO" id="GO:0006412">
    <property type="term" value="P:translation"/>
    <property type="evidence" value="ECO:0007669"/>
    <property type="project" value="UniProtKB-UniRule"/>
</dbReference>
<dbReference type="FunFam" id="1.10.8.50:FF:000001">
    <property type="entry name" value="30S ribosomal protein S13"/>
    <property type="match status" value="1"/>
</dbReference>
<dbReference type="FunFam" id="4.10.910.10:FF:000001">
    <property type="entry name" value="30S ribosomal protein S13"/>
    <property type="match status" value="1"/>
</dbReference>
<dbReference type="Gene3D" id="1.10.8.50">
    <property type="match status" value="1"/>
</dbReference>
<dbReference type="Gene3D" id="4.10.910.10">
    <property type="entry name" value="30s ribosomal protein s13, domain 2"/>
    <property type="match status" value="1"/>
</dbReference>
<dbReference type="HAMAP" id="MF_01315">
    <property type="entry name" value="Ribosomal_uS13"/>
    <property type="match status" value="1"/>
</dbReference>
<dbReference type="InterPro" id="IPR027437">
    <property type="entry name" value="Rbsml_uS13_C"/>
</dbReference>
<dbReference type="InterPro" id="IPR001892">
    <property type="entry name" value="Ribosomal_uS13"/>
</dbReference>
<dbReference type="InterPro" id="IPR010979">
    <property type="entry name" value="Ribosomal_uS13-like_H2TH"/>
</dbReference>
<dbReference type="InterPro" id="IPR019980">
    <property type="entry name" value="Ribosomal_uS13_bac-type"/>
</dbReference>
<dbReference type="InterPro" id="IPR018269">
    <property type="entry name" value="Ribosomal_uS13_CS"/>
</dbReference>
<dbReference type="NCBIfam" id="TIGR03631">
    <property type="entry name" value="uS13_bact"/>
    <property type="match status" value="1"/>
</dbReference>
<dbReference type="PANTHER" id="PTHR10871">
    <property type="entry name" value="30S RIBOSOMAL PROTEIN S13/40S RIBOSOMAL PROTEIN S18"/>
    <property type="match status" value="1"/>
</dbReference>
<dbReference type="PANTHER" id="PTHR10871:SF1">
    <property type="entry name" value="SMALL RIBOSOMAL SUBUNIT PROTEIN US13M"/>
    <property type="match status" value="1"/>
</dbReference>
<dbReference type="Pfam" id="PF00416">
    <property type="entry name" value="Ribosomal_S13"/>
    <property type="match status" value="1"/>
</dbReference>
<dbReference type="PIRSF" id="PIRSF002134">
    <property type="entry name" value="Ribosomal_S13"/>
    <property type="match status" value="1"/>
</dbReference>
<dbReference type="SUPFAM" id="SSF46946">
    <property type="entry name" value="S13-like H2TH domain"/>
    <property type="match status" value="1"/>
</dbReference>
<dbReference type="PROSITE" id="PS00646">
    <property type="entry name" value="RIBOSOMAL_S13_1"/>
    <property type="match status" value="1"/>
</dbReference>
<dbReference type="PROSITE" id="PS50159">
    <property type="entry name" value="RIBOSOMAL_S13_2"/>
    <property type="match status" value="1"/>
</dbReference>
<sequence length="122" mass="13830">MARIAGVNIPTNKRVLIALQYIHGIGQKNAADIIEKVKIPVDRRVNQLSDAEVLQIREVIDRDYLVEGDLRRETGMNIKRLMDLGCYRGLRHRRGLPVRGQRTHTNARTRKGPAKAIAGKKK</sequence>
<reference key="1">
    <citation type="submission" date="2006-03" db="EMBL/GenBank/DDBJ databases">
        <title>Complete sequence of Rhodopseudomonas palustris BisB5.</title>
        <authorList>
            <consortium name="US DOE Joint Genome Institute"/>
            <person name="Copeland A."/>
            <person name="Lucas S."/>
            <person name="Lapidus A."/>
            <person name="Barry K."/>
            <person name="Detter J.C."/>
            <person name="Glavina del Rio T."/>
            <person name="Hammon N."/>
            <person name="Israni S."/>
            <person name="Dalin E."/>
            <person name="Tice H."/>
            <person name="Pitluck S."/>
            <person name="Chain P."/>
            <person name="Malfatti S."/>
            <person name="Shin M."/>
            <person name="Vergez L."/>
            <person name="Schmutz J."/>
            <person name="Larimer F."/>
            <person name="Land M."/>
            <person name="Hauser L."/>
            <person name="Pelletier D.A."/>
            <person name="Kyrpides N."/>
            <person name="Lykidis A."/>
            <person name="Oda Y."/>
            <person name="Harwood C.S."/>
            <person name="Richardson P."/>
        </authorList>
    </citation>
    <scope>NUCLEOTIDE SEQUENCE [LARGE SCALE GENOMIC DNA]</scope>
    <source>
        <strain>BisB5</strain>
    </source>
</reference>
<feature type="chain" id="PRO_0000306694" description="Small ribosomal subunit protein uS13">
    <location>
        <begin position="1"/>
        <end position="122"/>
    </location>
</feature>
<feature type="region of interest" description="Disordered" evidence="2">
    <location>
        <begin position="99"/>
        <end position="122"/>
    </location>
</feature>
<organism>
    <name type="scientific">Rhodopseudomonas palustris (strain BisB5)</name>
    <dbReference type="NCBI Taxonomy" id="316057"/>
    <lineage>
        <taxon>Bacteria</taxon>
        <taxon>Pseudomonadati</taxon>
        <taxon>Pseudomonadota</taxon>
        <taxon>Alphaproteobacteria</taxon>
        <taxon>Hyphomicrobiales</taxon>
        <taxon>Nitrobacteraceae</taxon>
        <taxon>Rhodopseudomonas</taxon>
    </lineage>
</organism>
<accession>Q134V1</accession>
<comment type="function">
    <text evidence="1">Located at the top of the head of the 30S subunit, it contacts several helices of the 16S rRNA. In the 70S ribosome it contacts the 23S rRNA (bridge B1a) and protein L5 of the 50S subunit (bridge B1b), connecting the 2 subunits; these bridges are implicated in subunit movement. Contacts the tRNAs in the A and P-sites.</text>
</comment>
<comment type="subunit">
    <text evidence="1">Part of the 30S ribosomal subunit. Forms a loose heterodimer with protein S19. Forms two bridges to the 50S subunit in the 70S ribosome.</text>
</comment>
<comment type="similarity">
    <text evidence="1">Belongs to the universal ribosomal protein uS13 family.</text>
</comment>
<name>RS13_RHOPS</name>
<evidence type="ECO:0000255" key="1">
    <source>
        <dbReference type="HAMAP-Rule" id="MF_01315"/>
    </source>
</evidence>
<evidence type="ECO:0000256" key="2">
    <source>
        <dbReference type="SAM" id="MobiDB-lite"/>
    </source>
</evidence>
<evidence type="ECO:0000305" key="3"/>
<keyword id="KW-0687">Ribonucleoprotein</keyword>
<keyword id="KW-0689">Ribosomal protein</keyword>
<keyword id="KW-0694">RNA-binding</keyword>
<keyword id="KW-0699">rRNA-binding</keyword>
<keyword id="KW-0820">tRNA-binding</keyword>